<comment type="catalytic activity">
    <reaction evidence="1">
        <text>L-seryl-[protein] + ATP = O-phospho-L-seryl-[protein] + ADP + H(+)</text>
        <dbReference type="Rhea" id="RHEA:17989"/>
        <dbReference type="Rhea" id="RHEA-COMP:9863"/>
        <dbReference type="Rhea" id="RHEA-COMP:11604"/>
        <dbReference type="ChEBI" id="CHEBI:15378"/>
        <dbReference type="ChEBI" id="CHEBI:29999"/>
        <dbReference type="ChEBI" id="CHEBI:30616"/>
        <dbReference type="ChEBI" id="CHEBI:83421"/>
        <dbReference type="ChEBI" id="CHEBI:456216"/>
        <dbReference type="EC" id="2.7.11.1"/>
    </reaction>
</comment>
<comment type="catalytic activity">
    <reaction evidence="1">
        <text>L-threonyl-[protein] + ATP = O-phospho-L-threonyl-[protein] + ADP + H(+)</text>
        <dbReference type="Rhea" id="RHEA:46608"/>
        <dbReference type="Rhea" id="RHEA-COMP:11060"/>
        <dbReference type="Rhea" id="RHEA-COMP:11605"/>
        <dbReference type="ChEBI" id="CHEBI:15378"/>
        <dbReference type="ChEBI" id="CHEBI:30013"/>
        <dbReference type="ChEBI" id="CHEBI:30616"/>
        <dbReference type="ChEBI" id="CHEBI:61977"/>
        <dbReference type="ChEBI" id="CHEBI:456216"/>
        <dbReference type="EC" id="2.7.11.1"/>
    </reaction>
</comment>
<comment type="subcellular location">
    <subcellularLocation>
        <location evidence="6">Membrane</location>
        <topology evidence="6">Single-pass membrane protein</topology>
    </subcellularLocation>
</comment>
<comment type="similarity">
    <text evidence="3">Belongs to the protein kinase superfamily. Ser/Thr protein kinase family. CRK subfamily.</text>
</comment>
<comment type="sequence caution" evidence="6">
    <conflict type="frameshift">
        <sequence resource="EMBL-CDS" id="CAB78196"/>
    </conflict>
</comment>
<comment type="sequence caution" evidence="6">
    <conflict type="frameshift">
        <sequence resource="EMBL-CDS" id="CAB82158"/>
    </conflict>
</comment>
<keyword id="KW-0067">ATP-binding</keyword>
<keyword id="KW-0325">Glycoprotein</keyword>
<keyword id="KW-0418">Kinase</keyword>
<keyword id="KW-0472">Membrane</keyword>
<keyword id="KW-0547">Nucleotide-binding</keyword>
<keyword id="KW-0597">Phosphoprotein</keyword>
<keyword id="KW-0675">Receptor</keyword>
<keyword id="KW-1185">Reference proteome</keyword>
<keyword id="KW-0677">Repeat</keyword>
<keyword id="KW-0723">Serine/threonine-protein kinase</keyword>
<keyword id="KW-0732">Signal</keyword>
<keyword id="KW-0808">Transferase</keyword>
<keyword id="KW-0812">Transmembrane</keyword>
<keyword id="KW-1133">Transmembrane helix</keyword>
<dbReference type="EC" id="2.7.11.1" evidence="1"/>
<dbReference type="EMBL" id="AL050399">
    <property type="protein sequence ID" value="CAB82158.1"/>
    <property type="status" value="ALT_FRAME"/>
    <property type="molecule type" value="Genomic_DNA"/>
</dbReference>
<dbReference type="EMBL" id="AL161532">
    <property type="protein sequence ID" value="CAB78196.1"/>
    <property type="status" value="ALT_FRAME"/>
    <property type="molecule type" value="Genomic_DNA"/>
</dbReference>
<dbReference type="EMBL" id="CP002687">
    <property type="status" value="NOT_ANNOTATED_CDS"/>
    <property type="molecule type" value="Genomic_DNA"/>
</dbReference>
<dbReference type="PIR" id="B85122">
    <property type="entry name" value="B85122"/>
</dbReference>
<dbReference type="PIR" id="T10573">
    <property type="entry name" value="T10573"/>
</dbReference>
<dbReference type="SMR" id="Q9LDQ3"/>
<dbReference type="FunCoup" id="Q9LDQ3">
    <property type="interactions" value="222"/>
</dbReference>
<dbReference type="STRING" id="3702.Q9LDQ3"/>
<dbReference type="GlyCosmos" id="Q9LDQ3">
    <property type="glycosylation" value="8 sites, No reported glycans"/>
</dbReference>
<dbReference type="GlyGen" id="Q9LDQ3">
    <property type="glycosylation" value="8 sites"/>
</dbReference>
<dbReference type="PaxDb" id="3702-AT4G11530.1"/>
<dbReference type="Araport" id="AT4G11530"/>
<dbReference type="TAIR" id="AT4G11530">
    <property type="gene designation" value="CRK34"/>
</dbReference>
<dbReference type="eggNOG" id="ENOG502QWDY">
    <property type="taxonomic scope" value="Eukaryota"/>
</dbReference>
<dbReference type="HOGENOM" id="CLU_000288_35_7_1"/>
<dbReference type="InParanoid" id="Q9LDQ3"/>
<dbReference type="PRO" id="PR:Q9LDQ3"/>
<dbReference type="Proteomes" id="UP000006548">
    <property type="component" value="Chromosome 4"/>
</dbReference>
<dbReference type="ExpressionAtlas" id="Q9LDQ3">
    <property type="expression patterns" value="baseline and differential"/>
</dbReference>
<dbReference type="GO" id="GO:0005886">
    <property type="term" value="C:plasma membrane"/>
    <property type="evidence" value="ECO:0000318"/>
    <property type="project" value="GO_Central"/>
</dbReference>
<dbReference type="GO" id="GO:0005524">
    <property type="term" value="F:ATP binding"/>
    <property type="evidence" value="ECO:0007669"/>
    <property type="project" value="UniProtKB-KW"/>
</dbReference>
<dbReference type="GO" id="GO:0106310">
    <property type="term" value="F:protein serine kinase activity"/>
    <property type="evidence" value="ECO:0007669"/>
    <property type="project" value="RHEA"/>
</dbReference>
<dbReference type="GO" id="GO:0004674">
    <property type="term" value="F:protein serine/threonine kinase activity"/>
    <property type="evidence" value="ECO:0000318"/>
    <property type="project" value="GO_Central"/>
</dbReference>
<dbReference type="GO" id="GO:0042742">
    <property type="term" value="P:defense response to bacterium"/>
    <property type="evidence" value="ECO:0000318"/>
    <property type="project" value="GO_Central"/>
</dbReference>
<dbReference type="GO" id="GO:0009626">
    <property type="term" value="P:plant-type hypersensitive response"/>
    <property type="evidence" value="ECO:0000318"/>
    <property type="project" value="GO_Central"/>
</dbReference>
<dbReference type="GO" id="GO:0007165">
    <property type="term" value="P:signal transduction"/>
    <property type="evidence" value="ECO:0000318"/>
    <property type="project" value="GO_Central"/>
</dbReference>
<dbReference type="CDD" id="cd23509">
    <property type="entry name" value="Gnk2-like"/>
    <property type="match status" value="2"/>
</dbReference>
<dbReference type="CDD" id="cd14066">
    <property type="entry name" value="STKc_IRAK"/>
    <property type="match status" value="1"/>
</dbReference>
<dbReference type="FunFam" id="1.10.510.10:FF:000129">
    <property type="entry name" value="cysteine-rich receptor-like protein kinase 10"/>
    <property type="match status" value="1"/>
</dbReference>
<dbReference type="FunFam" id="3.30.430.20:FF:000007">
    <property type="entry name" value="Cysteine-rich receptor-like protein kinase 11"/>
    <property type="match status" value="1"/>
</dbReference>
<dbReference type="FunFam" id="3.30.430.20:FF:000003">
    <property type="entry name" value="Cysteine-rich RLK (RECEPTOR-like protein kinase) 10"/>
    <property type="match status" value="1"/>
</dbReference>
<dbReference type="FunFam" id="3.30.200.20:FF:000727">
    <property type="entry name" value="Cysteine-rich RLK (RECEPTOR-like protein kinase) 23"/>
    <property type="match status" value="1"/>
</dbReference>
<dbReference type="Gene3D" id="3.30.430.20">
    <property type="entry name" value="Gnk2 domain, C-X8-C-X2-C motif"/>
    <property type="match status" value="2"/>
</dbReference>
<dbReference type="Gene3D" id="3.30.200.20">
    <property type="entry name" value="Phosphorylase Kinase, domain 1"/>
    <property type="match status" value="1"/>
</dbReference>
<dbReference type="Gene3D" id="1.10.510.10">
    <property type="entry name" value="Transferase(Phosphotransferase) domain 1"/>
    <property type="match status" value="1"/>
</dbReference>
<dbReference type="InterPro" id="IPR002902">
    <property type="entry name" value="GNK2"/>
</dbReference>
<dbReference type="InterPro" id="IPR038408">
    <property type="entry name" value="GNK2_sf"/>
</dbReference>
<dbReference type="InterPro" id="IPR011009">
    <property type="entry name" value="Kinase-like_dom_sf"/>
</dbReference>
<dbReference type="InterPro" id="IPR000719">
    <property type="entry name" value="Prot_kinase_dom"/>
</dbReference>
<dbReference type="InterPro" id="IPR017441">
    <property type="entry name" value="Protein_kinase_ATP_BS"/>
</dbReference>
<dbReference type="InterPro" id="IPR001245">
    <property type="entry name" value="Ser-Thr/Tyr_kinase_cat_dom"/>
</dbReference>
<dbReference type="InterPro" id="IPR008271">
    <property type="entry name" value="Ser/Thr_kinase_AS"/>
</dbReference>
<dbReference type="PANTHER" id="PTHR27002:SF1047">
    <property type="entry name" value="CYSTEINE-RICH RECEPTOR-LIKE PROTEIN KINASE 34"/>
    <property type="match status" value="1"/>
</dbReference>
<dbReference type="PANTHER" id="PTHR27002">
    <property type="entry name" value="RECEPTOR-LIKE SERINE/THREONINE-PROTEIN KINASE SD1-8"/>
    <property type="match status" value="1"/>
</dbReference>
<dbReference type="Pfam" id="PF07714">
    <property type="entry name" value="PK_Tyr_Ser-Thr"/>
    <property type="match status" value="1"/>
</dbReference>
<dbReference type="Pfam" id="PF01657">
    <property type="entry name" value="Stress-antifung"/>
    <property type="match status" value="2"/>
</dbReference>
<dbReference type="SMART" id="SM00220">
    <property type="entry name" value="S_TKc"/>
    <property type="match status" value="1"/>
</dbReference>
<dbReference type="SUPFAM" id="SSF56112">
    <property type="entry name" value="Protein kinase-like (PK-like)"/>
    <property type="match status" value="1"/>
</dbReference>
<dbReference type="PROSITE" id="PS51473">
    <property type="entry name" value="GNK2"/>
    <property type="match status" value="2"/>
</dbReference>
<dbReference type="PROSITE" id="PS00107">
    <property type="entry name" value="PROTEIN_KINASE_ATP"/>
    <property type="match status" value="1"/>
</dbReference>
<dbReference type="PROSITE" id="PS50011">
    <property type="entry name" value="PROTEIN_KINASE_DOM"/>
    <property type="match status" value="1"/>
</dbReference>
<dbReference type="PROSITE" id="PS00108">
    <property type="entry name" value="PROTEIN_KINASE_ST"/>
    <property type="match status" value="1"/>
</dbReference>
<protein>
    <recommendedName>
        <fullName evidence="6">Cysteine-rich receptor-like protein kinase 34</fullName>
        <shortName evidence="6">Cysteine-rich RLK34</shortName>
        <ecNumber evidence="1">2.7.11.1</ecNumber>
    </recommendedName>
</protein>
<proteinExistence type="inferred from homology"/>
<organism>
    <name type="scientific">Arabidopsis thaliana</name>
    <name type="common">Mouse-ear cress</name>
    <dbReference type="NCBI Taxonomy" id="3702"/>
    <lineage>
        <taxon>Eukaryota</taxon>
        <taxon>Viridiplantae</taxon>
        <taxon>Streptophyta</taxon>
        <taxon>Embryophyta</taxon>
        <taxon>Tracheophyta</taxon>
        <taxon>Spermatophyta</taxon>
        <taxon>Magnoliopsida</taxon>
        <taxon>eudicotyledons</taxon>
        <taxon>Gunneridae</taxon>
        <taxon>Pentapetalae</taxon>
        <taxon>rosids</taxon>
        <taxon>malvids</taxon>
        <taxon>Brassicales</taxon>
        <taxon>Brassicaceae</taxon>
        <taxon>Camelineae</taxon>
        <taxon>Arabidopsis</taxon>
    </lineage>
</organism>
<accession>Q9LDQ3</accession>
<reference key="1">
    <citation type="journal article" date="1999" name="Nature">
        <title>Sequence and analysis of chromosome 4 of the plant Arabidopsis thaliana.</title>
        <authorList>
            <person name="Mayer K.F.X."/>
            <person name="Schueller C."/>
            <person name="Wambutt R."/>
            <person name="Murphy G."/>
            <person name="Volckaert G."/>
            <person name="Pohl T."/>
            <person name="Duesterhoeft A."/>
            <person name="Stiekema W."/>
            <person name="Entian K.-D."/>
            <person name="Terryn N."/>
            <person name="Harris B."/>
            <person name="Ansorge W."/>
            <person name="Brandt P."/>
            <person name="Grivell L.A."/>
            <person name="Rieger M."/>
            <person name="Weichselgartner M."/>
            <person name="de Simone V."/>
            <person name="Obermaier B."/>
            <person name="Mache R."/>
            <person name="Mueller M."/>
            <person name="Kreis M."/>
            <person name="Delseny M."/>
            <person name="Puigdomenech P."/>
            <person name="Watson M."/>
            <person name="Schmidtheini T."/>
            <person name="Reichert B."/>
            <person name="Portetelle D."/>
            <person name="Perez-Alonso M."/>
            <person name="Boutry M."/>
            <person name="Bancroft I."/>
            <person name="Vos P."/>
            <person name="Hoheisel J."/>
            <person name="Zimmermann W."/>
            <person name="Wedler H."/>
            <person name="Ridley P."/>
            <person name="Langham S.-A."/>
            <person name="McCullagh B."/>
            <person name="Bilham L."/>
            <person name="Robben J."/>
            <person name="van der Schueren J."/>
            <person name="Grymonprez B."/>
            <person name="Chuang Y.-J."/>
            <person name="Vandenbussche F."/>
            <person name="Braeken M."/>
            <person name="Weltjens I."/>
            <person name="Voet M."/>
            <person name="Bastiaens I."/>
            <person name="Aert R."/>
            <person name="Defoor E."/>
            <person name="Weitzenegger T."/>
            <person name="Bothe G."/>
            <person name="Ramsperger U."/>
            <person name="Hilbert H."/>
            <person name="Braun M."/>
            <person name="Holzer E."/>
            <person name="Brandt A."/>
            <person name="Peters S."/>
            <person name="van Staveren M."/>
            <person name="Dirkse W."/>
            <person name="Mooijman P."/>
            <person name="Klein Lankhorst R."/>
            <person name="Rose M."/>
            <person name="Hauf J."/>
            <person name="Koetter P."/>
            <person name="Berneiser S."/>
            <person name="Hempel S."/>
            <person name="Feldpausch M."/>
            <person name="Lamberth S."/>
            <person name="Van den Daele H."/>
            <person name="De Keyser A."/>
            <person name="Buysshaert C."/>
            <person name="Gielen J."/>
            <person name="Villarroel R."/>
            <person name="De Clercq R."/>
            <person name="van Montagu M."/>
            <person name="Rogers J."/>
            <person name="Cronin A."/>
            <person name="Quail M.A."/>
            <person name="Bray-Allen S."/>
            <person name="Clark L."/>
            <person name="Doggett J."/>
            <person name="Hall S."/>
            <person name="Kay M."/>
            <person name="Lennard N."/>
            <person name="McLay K."/>
            <person name="Mayes R."/>
            <person name="Pettett A."/>
            <person name="Rajandream M.A."/>
            <person name="Lyne M."/>
            <person name="Benes V."/>
            <person name="Rechmann S."/>
            <person name="Borkova D."/>
            <person name="Bloecker H."/>
            <person name="Scharfe M."/>
            <person name="Grimm M."/>
            <person name="Loehnert T.-H."/>
            <person name="Dose S."/>
            <person name="de Haan M."/>
            <person name="Maarse A.C."/>
            <person name="Schaefer M."/>
            <person name="Mueller-Auer S."/>
            <person name="Gabel C."/>
            <person name="Fuchs M."/>
            <person name="Fartmann B."/>
            <person name="Granderath K."/>
            <person name="Dauner D."/>
            <person name="Herzl A."/>
            <person name="Neumann S."/>
            <person name="Argiriou A."/>
            <person name="Vitale D."/>
            <person name="Liguori R."/>
            <person name="Piravandi E."/>
            <person name="Massenet O."/>
            <person name="Quigley F."/>
            <person name="Clabauld G."/>
            <person name="Muendlein A."/>
            <person name="Felber R."/>
            <person name="Schnabl S."/>
            <person name="Hiller R."/>
            <person name="Schmidt W."/>
            <person name="Lecharny A."/>
            <person name="Aubourg S."/>
            <person name="Chefdor F."/>
            <person name="Cooke R."/>
            <person name="Berger C."/>
            <person name="Monfort A."/>
            <person name="Casacuberta E."/>
            <person name="Gibbons T."/>
            <person name="Weber N."/>
            <person name="Vandenbol M."/>
            <person name="Bargues M."/>
            <person name="Terol J."/>
            <person name="Torres A."/>
            <person name="Perez-Perez A."/>
            <person name="Purnelle B."/>
            <person name="Bent E."/>
            <person name="Johnson S."/>
            <person name="Tacon D."/>
            <person name="Jesse T."/>
            <person name="Heijnen L."/>
            <person name="Schwarz S."/>
            <person name="Scholler P."/>
            <person name="Heber S."/>
            <person name="Francs P."/>
            <person name="Bielke C."/>
            <person name="Frishman D."/>
            <person name="Haase D."/>
            <person name="Lemcke K."/>
            <person name="Mewes H.-W."/>
            <person name="Stocker S."/>
            <person name="Zaccaria P."/>
            <person name="Bevan M."/>
            <person name="Wilson R.K."/>
            <person name="de la Bastide M."/>
            <person name="Habermann K."/>
            <person name="Parnell L."/>
            <person name="Dedhia N."/>
            <person name="Gnoj L."/>
            <person name="Schutz K."/>
            <person name="Huang E."/>
            <person name="Spiegel L."/>
            <person name="Sekhon M."/>
            <person name="Murray J."/>
            <person name="Sheet P."/>
            <person name="Cordes M."/>
            <person name="Abu-Threideh J."/>
            <person name="Stoneking T."/>
            <person name="Kalicki J."/>
            <person name="Graves T."/>
            <person name="Harmon G."/>
            <person name="Edwards J."/>
            <person name="Latreille P."/>
            <person name="Courtney L."/>
            <person name="Cloud J."/>
            <person name="Abbott A."/>
            <person name="Scott K."/>
            <person name="Johnson D."/>
            <person name="Minx P."/>
            <person name="Bentley D."/>
            <person name="Fulton B."/>
            <person name="Miller N."/>
            <person name="Greco T."/>
            <person name="Kemp K."/>
            <person name="Kramer J."/>
            <person name="Fulton L."/>
            <person name="Mardis E."/>
            <person name="Dante M."/>
            <person name="Pepin K."/>
            <person name="Hillier L.W."/>
            <person name="Nelson J."/>
            <person name="Spieth J."/>
            <person name="Ryan E."/>
            <person name="Andrews S."/>
            <person name="Geisel C."/>
            <person name="Layman D."/>
            <person name="Du H."/>
            <person name="Ali J."/>
            <person name="Berghoff A."/>
            <person name="Jones K."/>
            <person name="Drone K."/>
            <person name="Cotton M."/>
            <person name="Joshu C."/>
            <person name="Antonoiu B."/>
            <person name="Zidanic M."/>
            <person name="Strong C."/>
            <person name="Sun H."/>
            <person name="Lamar B."/>
            <person name="Yordan C."/>
            <person name="Ma P."/>
            <person name="Zhong J."/>
            <person name="Preston R."/>
            <person name="Vil D."/>
            <person name="Shekher M."/>
            <person name="Matero A."/>
            <person name="Shah R."/>
            <person name="Swaby I.K."/>
            <person name="O'Shaughnessy A."/>
            <person name="Rodriguez M."/>
            <person name="Hoffman J."/>
            <person name="Till S."/>
            <person name="Granat S."/>
            <person name="Shohdy N."/>
            <person name="Hasegawa A."/>
            <person name="Hameed A."/>
            <person name="Lodhi M."/>
            <person name="Johnson A."/>
            <person name="Chen E."/>
            <person name="Marra M.A."/>
            <person name="Martienssen R."/>
            <person name="McCombie W.R."/>
        </authorList>
    </citation>
    <scope>NUCLEOTIDE SEQUENCE [LARGE SCALE GENOMIC DNA]</scope>
    <source>
        <strain>cv. Columbia</strain>
    </source>
</reference>
<reference key="2">
    <citation type="journal article" date="2017" name="Plant J.">
        <title>Araport11: a complete reannotation of the Arabidopsis thaliana reference genome.</title>
        <authorList>
            <person name="Cheng C.Y."/>
            <person name="Krishnakumar V."/>
            <person name="Chan A.P."/>
            <person name="Thibaud-Nissen F."/>
            <person name="Schobel S."/>
            <person name="Town C.D."/>
        </authorList>
    </citation>
    <scope>GENOME REANNOTATION</scope>
    <source>
        <strain>cv. Columbia</strain>
    </source>
</reference>
<reference key="3">
    <citation type="journal article" date="2001" name="Plant Physiol.">
        <title>A superfamily of proteins with novel cysteine-rich repeats.</title>
        <authorList>
            <person name="Chen Z."/>
        </authorList>
    </citation>
    <scope>GENE FAMILY ORGANIZATION</scope>
    <scope>NOMENCLATURE</scope>
</reference>
<sequence>MKLKISFLPTFLIFLISLDSVTAQEICFSGFFKPNSTYDLNRRQILSTLSSNVTSHNGFFNSKFGQAPNRVFINGMCIPGTKPETCSDCIKGASDKISESCPNKTDAYTWPDCCMVRYSNVSFSGSLVMEPSETLYHTGDIEDTGTNLTVFDRIWEELMLRTITAASLSSSNGSSFGQKYFAAEVASLTTFQTMYAMMQCTPDVSSKDCEFCLKTSVGDYESCCRGKQGGAVIRPSCFVRWDLYPYAGAFENVTFPPPPPQSLPQPPVSLIPPPVSDRANTTIKGIIVAIVVPIIVILVSLVVLLVVCRRKKSYKTTEVQATDEITTTHSLQFSFKTIEAATDKFSDSNMIGRGGFGEVYRGKLSSGPEVAVKRLSKTSGQGAEEFKNEAVLVSKLQHKNLVRLLGFCLEGEEKILVYEFVPNKSLDYFLFDPAKQGELDWTRRYNIIGGIARGILYLHQDSRLTIIHRDLKASNILLDADMNPKIADFGMARIFGVDQSQANTRRIAGTFGYMSPEYAMRGHFSMKSDVYSFGVLVLEIISGKKNSSFYNIDDSGSNLVTHAWRLWRNGSPLELVDPTIGESYQSSEATRCIHIALLCVQEDPADRPLLPAIIMMLTSSTTTLHVPRAPGFCLSGRDLEQDGVEYTESTSRSIPGSINDASITEFYPR</sequence>
<evidence type="ECO:0000250" key="1">
    <source>
        <dbReference type="UniProtKB" id="O48814"/>
    </source>
</evidence>
<evidence type="ECO:0000255" key="2"/>
<evidence type="ECO:0000255" key="3">
    <source>
        <dbReference type="PROSITE-ProRule" id="PRU00159"/>
    </source>
</evidence>
<evidence type="ECO:0000255" key="4">
    <source>
        <dbReference type="PROSITE-ProRule" id="PRU00806"/>
    </source>
</evidence>
<evidence type="ECO:0000255" key="5">
    <source>
        <dbReference type="PROSITE-ProRule" id="PRU10027"/>
    </source>
</evidence>
<evidence type="ECO:0000305" key="6"/>
<gene>
    <name evidence="6" type="primary">CRK34</name>
    <name type="ordered locus">At4g11530</name>
    <name type="ORF">F25E4.150</name>
</gene>
<name>CRK34_ARATH</name>
<feature type="signal peptide" evidence="2">
    <location>
        <begin position="1"/>
        <end position="23"/>
    </location>
</feature>
<feature type="chain" id="PRO_0000295082" description="Cysteine-rich receptor-like protein kinase 34">
    <location>
        <begin position="24"/>
        <end position="669"/>
    </location>
</feature>
<feature type="topological domain" description="Extracellular" evidence="2">
    <location>
        <begin position="24"/>
        <end position="285"/>
    </location>
</feature>
<feature type="transmembrane region" description="Helical" evidence="2">
    <location>
        <begin position="286"/>
        <end position="306"/>
    </location>
</feature>
<feature type="topological domain" description="Cytoplasmic" evidence="2">
    <location>
        <begin position="307"/>
        <end position="669"/>
    </location>
</feature>
<feature type="domain" description="Gnk2-homologous 1" evidence="4">
    <location>
        <begin position="24"/>
        <end position="123"/>
    </location>
</feature>
<feature type="domain" description="Gnk2-homologous 2" evidence="4">
    <location>
        <begin position="133"/>
        <end position="246"/>
    </location>
</feature>
<feature type="domain" description="Protein kinase" evidence="3">
    <location>
        <begin position="345"/>
        <end position="624"/>
    </location>
</feature>
<feature type="active site" description="Proton acceptor" evidence="3 5">
    <location>
        <position position="470"/>
    </location>
</feature>
<feature type="binding site" evidence="3">
    <location>
        <begin position="351"/>
        <end position="359"/>
    </location>
    <ligand>
        <name>ATP</name>
        <dbReference type="ChEBI" id="CHEBI:30616"/>
    </ligand>
</feature>
<feature type="binding site" evidence="3">
    <location>
        <position position="373"/>
    </location>
    <ligand>
        <name>ATP</name>
        <dbReference type="ChEBI" id="CHEBI:30616"/>
    </ligand>
</feature>
<feature type="modified residue" description="Phosphotyrosine" evidence="1">
    <location>
        <position position="418"/>
    </location>
</feature>
<feature type="modified residue" description="Phosphoserine" evidence="1">
    <location>
        <position position="474"/>
    </location>
</feature>
<feature type="modified residue" description="Phosphothreonine" evidence="1">
    <location>
        <position position="510"/>
    </location>
</feature>
<feature type="modified residue" description="Phosphotyrosine" evidence="1">
    <location>
        <position position="518"/>
    </location>
</feature>
<feature type="glycosylation site" description="N-linked (GlcNAc...) asparagine" evidence="2">
    <location>
        <position position="35"/>
    </location>
</feature>
<feature type="glycosylation site" description="N-linked (GlcNAc...) asparagine" evidence="2">
    <location>
        <position position="52"/>
    </location>
</feature>
<feature type="glycosylation site" description="N-linked (GlcNAc...) asparagine" evidence="2">
    <location>
        <position position="103"/>
    </location>
</feature>
<feature type="glycosylation site" description="N-linked (GlcNAc...) asparagine" evidence="2">
    <location>
        <position position="120"/>
    </location>
</feature>
<feature type="glycosylation site" description="N-linked (GlcNAc...) asparagine" evidence="2">
    <location>
        <position position="147"/>
    </location>
</feature>
<feature type="glycosylation site" description="N-linked (GlcNAc...) asparagine" evidence="2">
    <location>
        <position position="172"/>
    </location>
</feature>
<feature type="glycosylation site" description="N-linked (GlcNAc...) asparagine" evidence="2">
    <location>
        <position position="252"/>
    </location>
</feature>
<feature type="glycosylation site" description="N-linked (GlcNAc...) asparagine" evidence="2">
    <location>
        <position position="280"/>
    </location>
</feature>